<feature type="chain" id="PRO_0000281748" description="Putative ankyrin repeat protein RF_0314">
    <location>
        <begin position="1"/>
        <end position="227"/>
    </location>
</feature>
<feature type="repeat" description="ANK 1">
    <location>
        <begin position="94"/>
        <end position="126"/>
    </location>
</feature>
<feature type="repeat" description="ANK 2">
    <location>
        <begin position="130"/>
        <end position="164"/>
    </location>
</feature>
<feature type="repeat" description="ANK 3">
    <location>
        <begin position="168"/>
        <end position="199"/>
    </location>
</feature>
<protein>
    <recommendedName>
        <fullName>Putative ankyrin repeat protein RF_0314</fullName>
    </recommendedName>
</protein>
<accession>Q4UMP3</accession>
<sequence length="227" mass="26389">MLIKNKYKHSMFPVNQNNIIEENEEIKFDLIDTDIEIPFNYLTYILNSTSYITPEILFDGFKVVLPFYQDVQLKPLFELAFDQDVNINSQNKDNGCTFLHYSVEDVKVLYDNIPQFLLEKGADPNIQNKDGNTPLHILINRDFFSSKEIYVAKLLIQYGADIELKNLLGWTPIQCFIQAGNIKLKALLQLVKACKDNDFSKLDITTKDIKEFLDWQISITPENSKFF</sequence>
<reference key="1">
    <citation type="journal article" date="2005" name="PLoS Biol.">
        <title>The genome sequence of Rickettsia felis identifies the first putative conjugative plasmid in an obligate intracellular parasite.</title>
        <authorList>
            <person name="Ogata H."/>
            <person name="Renesto P."/>
            <person name="Audic S."/>
            <person name="Robert C."/>
            <person name="Blanc G."/>
            <person name="Fournier P.-E."/>
            <person name="Parinello H."/>
            <person name="Claverie J.-M."/>
            <person name="Raoult D."/>
        </authorList>
    </citation>
    <scope>NUCLEOTIDE SEQUENCE [LARGE SCALE GENOMIC DNA]</scope>
    <source>
        <strain>ATCC VR-1525 / URRWXCal2</strain>
    </source>
</reference>
<dbReference type="EMBL" id="CP000053">
    <property type="protein sequence ID" value="AAY61165.1"/>
    <property type="molecule type" value="Genomic_DNA"/>
</dbReference>
<dbReference type="SMR" id="Q4UMP3"/>
<dbReference type="STRING" id="315456.RF_0314"/>
<dbReference type="KEGG" id="rfe:RF_0314"/>
<dbReference type="eggNOG" id="COG0666">
    <property type="taxonomic scope" value="Bacteria"/>
</dbReference>
<dbReference type="HOGENOM" id="CLU_1218973_0_0_5"/>
<dbReference type="Proteomes" id="UP000008548">
    <property type="component" value="Chromosome"/>
</dbReference>
<dbReference type="Gene3D" id="1.25.40.20">
    <property type="entry name" value="Ankyrin repeat-containing domain"/>
    <property type="match status" value="1"/>
</dbReference>
<dbReference type="InterPro" id="IPR002110">
    <property type="entry name" value="Ankyrin_rpt"/>
</dbReference>
<dbReference type="InterPro" id="IPR036770">
    <property type="entry name" value="Ankyrin_rpt-contain_sf"/>
</dbReference>
<dbReference type="PANTHER" id="PTHR24197:SF44">
    <property type="entry name" value="ANKYRIN REPEAT DOMAIN-CONTAINING PROTEIN 54"/>
    <property type="match status" value="1"/>
</dbReference>
<dbReference type="PANTHER" id="PTHR24197">
    <property type="entry name" value="ANKYRIN REPEAT DOMAIN-CONTAINING PROTEIN 61"/>
    <property type="match status" value="1"/>
</dbReference>
<dbReference type="Pfam" id="PF13637">
    <property type="entry name" value="Ank_4"/>
    <property type="match status" value="1"/>
</dbReference>
<dbReference type="SMART" id="SM00248">
    <property type="entry name" value="ANK"/>
    <property type="match status" value="2"/>
</dbReference>
<dbReference type="SUPFAM" id="SSF48403">
    <property type="entry name" value="Ankyrin repeat"/>
    <property type="match status" value="1"/>
</dbReference>
<dbReference type="PROSITE" id="PS50297">
    <property type="entry name" value="ANK_REP_REGION"/>
    <property type="match status" value="1"/>
</dbReference>
<dbReference type="PROSITE" id="PS50088">
    <property type="entry name" value="ANK_REPEAT"/>
    <property type="match status" value="2"/>
</dbReference>
<keyword id="KW-0040">ANK repeat</keyword>
<keyword id="KW-0677">Repeat</keyword>
<name>Y314_RICFE</name>
<proteinExistence type="predicted"/>
<organism>
    <name type="scientific">Rickettsia felis (strain ATCC VR-1525 / URRWXCal2)</name>
    <name type="common">Rickettsia azadi</name>
    <dbReference type="NCBI Taxonomy" id="315456"/>
    <lineage>
        <taxon>Bacteria</taxon>
        <taxon>Pseudomonadati</taxon>
        <taxon>Pseudomonadota</taxon>
        <taxon>Alphaproteobacteria</taxon>
        <taxon>Rickettsiales</taxon>
        <taxon>Rickettsiaceae</taxon>
        <taxon>Rickettsieae</taxon>
        <taxon>Rickettsia</taxon>
        <taxon>spotted fever group</taxon>
    </lineage>
</organism>
<gene>
    <name type="ordered locus">RF_0314</name>
</gene>